<keyword id="KW-0687">Ribonucleoprotein</keyword>
<keyword id="KW-0689">Ribosomal protein</keyword>
<keyword id="KW-0694">RNA-binding</keyword>
<keyword id="KW-0699">rRNA-binding</keyword>
<feature type="chain" id="PRO_1000051850" description="Small ribosomal subunit protein uS11">
    <location>
        <begin position="1"/>
        <end position="127"/>
    </location>
</feature>
<name>RS11_RICCK</name>
<evidence type="ECO:0000255" key="1">
    <source>
        <dbReference type="HAMAP-Rule" id="MF_01310"/>
    </source>
</evidence>
<evidence type="ECO:0000305" key="2"/>
<gene>
    <name evidence="1" type="primary">rpsK</name>
    <name type="ordered locus">A1E_04255</name>
</gene>
<dbReference type="EMBL" id="CP000409">
    <property type="protein sequence ID" value="ABV73776.1"/>
    <property type="molecule type" value="Genomic_DNA"/>
</dbReference>
<dbReference type="RefSeq" id="WP_012148971.1">
    <property type="nucleotide sequence ID" value="NC_009879.1"/>
</dbReference>
<dbReference type="SMR" id="A8EZJ3"/>
<dbReference type="STRING" id="293613.A1E_04255"/>
<dbReference type="KEGG" id="rcm:A1E_04255"/>
<dbReference type="eggNOG" id="COG0100">
    <property type="taxonomic scope" value="Bacteria"/>
</dbReference>
<dbReference type="HOGENOM" id="CLU_072439_5_0_5"/>
<dbReference type="Proteomes" id="UP000007056">
    <property type="component" value="Chromosome"/>
</dbReference>
<dbReference type="GO" id="GO:1990904">
    <property type="term" value="C:ribonucleoprotein complex"/>
    <property type="evidence" value="ECO:0007669"/>
    <property type="project" value="UniProtKB-KW"/>
</dbReference>
<dbReference type="GO" id="GO:0005840">
    <property type="term" value="C:ribosome"/>
    <property type="evidence" value="ECO:0007669"/>
    <property type="project" value="UniProtKB-KW"/>
</dbReference>
<dbReference type="GO" id="GO:0019843">
    <property type="term" value="F:rRNA binding"/>
    <property type="evidence" value="ECO:0007669"/>
    <property type="project" value="UniProtKB-UniRule"/>
</dbReference>
<dbReference type="GO" id="GO:0003735">
    <property type="term" value="F:structural constituent of ribosome"/>
    <property type="evidence" value="ECO:0007669"/>
    <property type="project" value="InterPro"/>
</dbReference>
<dbReference type="GO" id="GO:0006412">
    <property type="term" value="P:translation"/>
    <property type="evidence" value="ECO:0007669"/>
    <property type="project" value="UniProtKB-UniRule"/>
</dbReference>
<dbReference type="Gene3D" id="3.30.420.80">
    <property type="entry name" value="Ribosomal protein S11"/>
    <property type="match status" value="1"/>
</dbReference>
<dbReference type="HAMAP" id="MF_01310">
    <property type="entry name" value="Ribosomal_uS11"/>
    <property type="match status" value="1"/>
</dbReference>
<dbReference type="InterPro" id="IPR001971">
    <property type="entry name" value="Ribosomal_uS11"/>
</dbReference>
<dbReference type="InterPro" id="IPR019981">
    <property type="entry name" value="Ribosomal_uS11_bac-type"/>
</dbReference>
<dbReference type="InterPro" id="IPR018102">
    <property type="entry name" value="Ribosomal_uS11_CS"/>
</dbReference>
<dbReference type="InterPro" id="IPR036967">
    <property type="entry name" value="Ribosomal_uS11_sf"/>
</dbReference>
<dbReference type="NCBIfam" id="NF003698">
    <property type="entry name" value="PRK05309.1"/>
    <property type="match status" value="1"/>
</dbReference>
<dbReference type="NCBIfam" id="TIGR03632">
    <property type="entry name" value="uS11_bact"/>
    <property type="match status" value="1"/>
</dbReference>
<dbReference type="PANTHER" id="PTHR11759">
    <property type="entry name" value="40S RIBOSOMAL PROTEIN S14/30S RIBOSOMAL PROTEIN S11"/>
    <property type="match status" value="1"/>
</dbReference>
<dbReference type="Pfam" id="PF00411">
    <property type="entry name" value="Ribosomal_S11"/>
    <property type="match status" value="1"/>
</dbReference>
<dbReference type="PIRSF" id="PIRSF002131">
    <property type="entry name" value="Ribosomal_S11"/>
    <property type="match status" value="1"/>
</dbReference>
<dbReference type="SUPFAM" id="SSF53137">
    <property type="entry name" value="Translational machinery components"/>
    <property type="match status" value="1"/>
</dbReference>
<dbReference type="PROSITE" id="PS00054">
    <property type="entry name" value="RIBOSOMAL_S11"/>
    <property type="match status" value="1"/>
</dbReference>
<sequence length="127" mass="13701">MNQTIKVKKKKKTITLGVVHIRASFNNTIVTFTDIQGNTISSASAGSNGFKGARKATPYAAQVTIDRASEKAKEYGLKTISIRIGGPGAQRESAMRALFGQNFVVTSILDVSSIAHNGVRPPKRRRV</sequence>
<comment type="function">
    <text evidence="1">Located on the platform of the 30S subunit, it bridges several disparate RNA helices of the 16S rRNA. Forms part of the Shine-Dalgarno cleft in the 70S ribosome.</text>
</comment>
<comment type="subunit">
    <text evidence="1">Part of the 30S ribosomal subunit. Interacts with proteins S7 and S18. Binds to IF-3.</text>
</comment>
<comment type="similarity">
    <text evidence="1">Belongs to the universal ribosomal protein uS11 family.</text>
</comment>
<protein>
    <recommendedName>
        <fullName evidence="1">Small ribosomal subunit protein uS11</fullName>
    </recommendedName>
    <alternativeName>
        <fullName evidence="2">30S ribosomal protein S11</fullName>
    </alternativeName>
</protein>
<organism>
    <name type="scientific">Rickettsia canadensis (strain McKiel)</name>
    <dbReference type="NCBI Taxonomy" id="293613"/>
    <lineage>
        <taxon>Bacteria</taxon>
        <taxon>Pseudomonadati</taxon>
        <taxon>Pseudomonadota</taxon>
        <taxon>Alphaproteobacteria</taxon>
        <taxon>Rickettsiales</taxon>
        <taxon>Rickettsiaceae</taxon>
        <taxon>Rickettsieae</taxon>
        <taxon>Rickettsia</taxon>
        <taxon>belli group</taxon>
    </lineage>
</organism>
<reference key="1">
    <citation type="submission" date="2007-09" db="EMBL/GenBank/DDBJ databases">
        <title>Complete genome sequence of Rickettsia canadensis.</title>
        <authorList>
            <person name="Madan A."/>
            <person name="Fahey J."/>
            <person name="Helton E."/>
            <person name="Ketteman M."/>
            <person name="Madan A."/>
            <person name="Rodrigues S."/>
            <person name="Sanchez A."/>
            <person name="Whiting M."/>
            <person name="Dasch G."/>
            <person name="Eremeeva M."/>
        </authorList>
    </citation>
    <scope>NUCLEOTIDE SEQUENCE [LARGE SCALE GENOMIC DNA]</scope>
    <source>
        <strain>McKiel</strain>
    </source>
</reference>
<proteinExistence type="inferred from homology"/>
<accession>A8EZJ3</accession>